<dbReference type="EC" id="3.4.22.46" evidence="4"/>
<dbReference type="EC" id="3.6.1.15" evidence="4"/>
<dbReference type="EC" id="3.4.22.28"/>
<dbReference type="EC" id="2.7.7.48" evidence="4"/>
<dbReference type="EMBL" id="AY593806">
    <property type="protein sequence ID" value="AAT01749.1"/>
    <property type="molecule type" value="Genomic_RNA"/>
</dbReference>
<dbReference type="EMBL" id="M90376">
    <property type="protein sequence ID" value="AAA91492.1"/>
    <property type="molecule type" value="Genomic_RNA"/>
</dbReference>
<dbReference type="EMBL" id="J02184">
    <property type="protein sequence ID" value="AAA42618.1"/>
    <property type="molecule type" value="Genomic_RNA"/>
</dbReference>
<dbReference type="PIR" id="A03912">
    <property type="entry name" value="A03912"/>
</dbReference>
<dbReference type="SMR" id="P03310"/>
<dbReference type="MEROPS" id="C28.001"/>
<dbReference type="Proteomes" id="UP000012668">
    <property type="component" value="Genome"/>
</dbReference>
<dbReference type="GO" id="GO:0044162">
    <property type="term" value="C:host cell cytoplasmic vesicle membrane"/>
    <property type="evidence" value="ECO:0007669"/>
    <property type="project" value="UniProtKB-SubCell"/>
</dbReference>
<dbReference type="GO" id="GO:0044167">
    <property type="term" value="C:host cell endoplasmic reticulum membrane"/>
    <property type="evidence" value="ECO:0007669"/>
    <property type="project" value="UniProtKB-SubCell"/>
</dbReference>
<dbReference type="GO" id="GO:0042025">
    <property type="term" value="C:host cell nucleus"/>
    <property type="evidence" value="ECO:0007669"/>
    <property type="project" value="UniProtKB-SubCell"/>
</dbReference>
<dbReference type="GO" id="GO:0016020">
    <property type="term" value="C:membrane"/>
    <property type="evidence" value="ECO:0007669"/>
    <property type="project" value="UniProtKB-KW"/>
</dbReference>
<dbReference type="GO" id="GO:0039618">
    <property type="term" value="C:T=pseudo3 icosahedral viral capsid"/>
    <property type="evidence" value="ECO:0007669"/>
    <property type="project" value="UniProtKB-KW"/>
</dbReference>
<dbReference type="GO" id="GO:0005524">
    <property type="term" value="F:ATP binding"/>
    <property type="evidence" value="ECO:0007669"/>
    <property type="project" value="UniProtKB-KW"/>
</dbReference>
<dbReference type="GO" id="GO:0015267">
    <property type="term" value="F:channel activity"/>
    <property type="evidence" value="ECO:0007669"/>
    <property type="project" value="UniProtKB-KW"/>
</dbReference>
<dbReference type="GO" id="GO:0004197">
    <property type="term" value="F:cysteine-type endopeptidase activity"/>
    <property type="evidence" value="ECO:0007669"/>
    <property type="project" value="UniProtKB-EC"/>
</dbReference>
<dbReference type="GO" id="GO:0017111">
    <property type="term" value="F:ribonucleoside triphosphate phosphatase activity"/>
    <property type="evidence" value="ECO:0007669"/>
    <property type="project" value="UniProtKB-EC"/>
</dbReference>
<dbReference type="GO" id="GO:0003723">
    <property type="term" value="F:RNA binding"/>
    <property type="evidence" value="ECO:0007669"/>
    <property type="project" value="UniProtKB-KW"/>
</dbReference>
<dbReference type="GO" id="GO:0003724">
    <property type="term" value="F:RNA helicase activity"/>
    <property type="evidence" value="ECO:0007669"/>
    <property type="project" value="InterPro"/>
</dbReference>
<dbReference type="GO" id="GO:0003968">
    <property type="term" value="F:RNA-directed RNA polymerase activity"/>
    <property type="evidence" value="ECO:0007669"/>
    <property type="project" value="UniProtKB-KW"/>
</dbReference>
<dbReference type="GO" id="GO:0005198">
    <property type="term" value="F:structural molecule activity"/>
    <property type="evidence" value="ECO:0007669"/>
    <property type="project" value="InterPro"/>
</dbReference>
<dbReference type="GO" id="GO:0075512">
    <property type="term" value="P:clathrin-dependent endocytosis of virus by host cell"/>
    <property type="evidence" value="ECO:0007669"/>
    <property type="project" value="UniProtKB-KW"/>
</dbReference>
<dbReference type="GO" id="GO:0006351">
    <property type="term" value="P:DNA-templated transcription"/>
    <property type="evidence" value="ECO:0007669"/>
    <property type="project" value="InterPro"/>
</dbReference>
<dbReference type="GO" id="GO:0034220">
    <property type="term" value="P:monoatomic ion transmembrane transport"/>
    <property type="evidence" value="ECO:0007669"/>
    <property type="project" value="UniProtKB-KW"/>
</dbReference>
<dbReference type="GO" id="GO:0006508">
    <property type="term" value="P:proteolysis"/>
    <property type="evidence" value="ECO:0007669"/>
    <property type="project" value="UniProtKB-KW"/>
</dbReference>
<dbReference type="GO" id="GO:0006417">
    <property type="term" value="P:regulation of translation"/>
    <property type="evidence" value="ECO:0007669"/>
    <property type="project" value="UniProtKB-KW"/>
</dbReference>
<dbReference type="GO" id="GO:0039520">
    <property type="term" value="P:symbiont-mediated activation of host autophagy"/>
    <property type="evidence" value="ECO:0000250"/>
    <property type="project" value="UniProtKB"/>
</dbReference>
<dbReference type="GO" id="GO:0039525">
    <property type="term" value="P:symbiont-mediated perturbation of host chromatin organization"/>
    <property type="evidence" value="ECO:0007669"/>
    <property type="project" value="UniProtKB-KW"/>
</dbReference>
<dbReference type="GO" id="GO:0019082">
    <property type="term" value="P:viral protein processing"/>
    <property type="evidence" value="ECO:0007669"/>
    <property type="project" value="InterPro"/>
</dbReference>
<dbReference type="GO" id="GO:0039694">
    <property type="term" value="P:viral RNA genome replication"/>
    <property type="evidence" value="ECO:0007669"/>
    <property type="project" value="InterPro"/>
</dbReference>
<dbReference type="GO" id="GO:0019062">
    <property type="term" value="P:virion attachment to host cell"/>
    <property type="evidence" value="ECO:0007669"/>
    <property type="project" value="UniProtKB-KW"/>
</dbReference>
<dbReference type="CDD" id="cd23210">
    <property type="entry name" value="Aphthovirus_RdRp"/>
    <property type="match status" value="1"/>
</dbReference>
<dbReference type="CDD" id="cd00205">
    <property type="entry name" value="rhv_like"/>
    <property type="match status" value="3"/>
</dbReference>
<dbReference type="FunFam" id="1.20.960.20:FF:000002">
    <property type="entry name" value="Genome polyprotein"/>
    <property type="match status" value="1"/>
</dbReference>
<dbReference type="FunFam" id="2.40.10.10:FF:000108">
    <property type="entry name" value="Genome polyprotein"/>
    <property type="match status" value="1"/>
</dbReference>
<dbReference type="FunFam" id="2.60.120.20:FF:000005">
    <property type="entry name" value="Genome polyprotein"/>
    <property type="match status" value="1"/>
</dbReference>
<dbReference type="FunFam" id="2.60.120.20:FF:000006">
    <property type="entry name" value="Genome polyprotein"/>
    <property type="match status" value="1"/>
</dbReference>
<dbReference type="FunFam" id="3.30.70.270:FF:000031">
    <property type="entry name" value="Genome polyprotein"/>
    <property type="match status" value="1"/>
</dbReference>
<dbReference type="Gene3D" id="1.20.960.20">
    <property type="match status" value="1"/>
</dbReference>
<dbReference type="Gene3D" id="2.60.120.20">
    <property type="match status" value="3"/>
</dbReference>
<dbReference type="Gene3D" id="3.30.70.270">
    <property type="match status" value="2"/>
</dbReference>
<dbReference type="Gene3D" id="4.10.90.10">
    <property type="entry name" value="Capsid protein VP4 superfamily, Picornavirus"/>
    <property type="match status" value="1"/>
</dbReference>
<dbReference type="Gene3D" id="3.90.70.10">
    <property type="entry name" value="Cysteine proteinases"/>
    <property type="match status" value="1"/>
</dbReference>
<dbReference type="Gene3D" id="2.40.10.10">
    <property type="entry name" value="Trypsin-like serine proteases"/>
    <property type="match status" value="2"/>
</dbReference>
<dbReference type="InterPro" id="IPR015031">
    <property type="entry name" value="Capsid_VP4_Picornavir"/>
</dbReference>
<dbReference type="InterPro" id="IPR037080">
    <property type="entry name" value="Capsid_VP4_sf_Picornavirus"/>
</dbReference>
<dbReference type="InterPro" id="IPR043502">
    <property type="entry name" value="DNA/RNA_pol_sf"/>
</dbReference>
<dbReference type="InterPro" id="IPR004080">
    <property type="entry name" value="FMDV_VP1_coat"/>
</dbReference>
<dbReference type="InterPro" id="IPR004004">
    <property type="entry name" value="Helic/Pol/Pept_Calicivir-typ"/>
</dbReference>
<dbReference type="InterPro" id="IPR000605">
    <property type="entry name" value="Helicase_SF3_ssDNA/RNA_vir"/>
</dbReference>
<dbReference type="InterPro" id="IPR014759">
    <property type="entry name" value="Helicase_SF3_ssRNA_vir"/>
</dbReference>
<dbReference type="InterPro" id="IPR027417">
    <property type="entry name" value="P-loop_NTPase"/>
</dbReference>
<dbReference type="InterPro" id="IPR038765">
    <property type="entry name" value="Papain-like_cys_pep_sf"/>
</dbReference>
<dbReference type="InterPro" id="IPR044067">
    <property type="entry name" value="PCV_3C_PRO"/>
</dbReference>
<dbReference type="InterPro" id="IPR008739">
    <property type="entry name" value="Peptidase_C28"/>
</dbReference>
<dbReference type="InterPro" id="IPR000199">
    <property type="entry name" value="Peptidase_C3A/C3B_picornavir"/>
</dbReference>
<dbReference type="InterPro" id="IPR009003">
    <property type="entry name" value="Peptidase_S1_PA"/>
</dbReference>
<dbReference type="InterPro" id="IPR043504">
    <property type="entry name" value="Peptidase_S1_PA_chymotrypsin"/>
</dbReference>
<dbReference type="InterPro" id="IPR001676">
    <property type="entry name" value="Picornavirus_capsid"/>
</dbReference>
<dbReference type="InterPro" id="IPR043128">
    <property type="entry name" value="Rev_trsase/Diguanyl_cyclase"/>
</dbReference>
<dbReference type="InterPro" id="IPR033703">
    <property type="entry name" value="Rhv-like"/>
</dbReference>
<dbReference type="InterPro" id="IPR001205">
    <property type="entry name" value="RNA-dir_pol_C"/>
</dbReference>
<dbReference type="InterPro" id="IPR007094">
    <property type="entry name" value="RNA-dir_pol_PSvirus"/>
</dbReference>
<dbReference type="InterPro" id="IPR029053">
    <property type="entry name" value="Viral_coat"/>
</dbReference>
<dbReference type="Pfam" id="PF05408">
    <property type="entry name" value="Peptidase_C28"/>
    <property type="match status" value="1"/>
</dbReference>
<dbReference type="Pfam" id="PF00548">
    <property type="entry name" value="Peptidase_C3"/>
    <property type="match status" value="1"/>
</dbReference>
<dbReference type="Pfam" id="PF00680">
    <property type="entry name" value="RdRP_1"/>
    <property type="match status" value="1"/>
</dbReference>
<dbReference type="Pfam" id="PF00073">
    <property type="entry name" value="Rhv"/>
    <property type="match status" value="2"/>
</dbReference>
<dbReference type="Pfam" id="PF22663">
    <property type="entry name" value="Rhv_5"/>
    <property type="match status" value="1"/>
</dbReference>
<dbReference type="Pfam" id="PF00910">
    <property type="entry name" value="RNA_helicase"/>
    <property type="match status" value="1"/>
</dbReference>
<dbReference type="Pfam" id="PF08935">
    <property type="entry name" value="VP4_2"/>
    <property type="match status" value="1"/>
</dbReference>
<dbReference type="PRINTS" id="PR00918">
    <property type="entry name" value="CALICVIRUSNS"/>
</dbReference>
<dbReference type="PRINTS" id="PR01542">
    <property type="entry name" value="FMDVP1COAT"/>
</dbReference>
<dbReference type="SUPFAM" id="SSF54001">
    <property type="entry name" value="Cysteine proteinases"/>
    <property type="match status" value="1"/>
</dbReference>
<dbReference type="SUPFAM" id="SSF56672">
    <property type="entry name" value="DNA/RNA polymerases"/>
    <property type="match status" value="1"/>
</dbReference>
<dbReference type="SUPFAM" id="SSF52540">
    <property type="entry name" value="P-loop containing nucleoside triphosphate hydrolases"/>
    <property type="match status" value="1"/>
</dbReference>
<dbReference type="SUPFAM" id="SSF88633">
    <property type="entry name" value="Positive stranded ssRNA viruses"/>
    <property type="match status" value="2"/>
</dbReference>
<dbReference type="SUPFAM" id="SSF50494">
    <property type="entry name" value="Trypsin-like serine proteases"/>
    <property type="match status" value="1"/>
</dbReference>
<dbReference type="PROSITE" id="PS51887">
    <property type="entry name" value="APHTHOVIRUS_LPRO"/>
    <property type="match status" value="1"/>
</dbReference>
<dbReference type="PROSITE" id="PS51874">
    <property type="entry name" value="PCV_3C_PRO"/>
    <property type="match status" value="1"/>
</dbReference>
<dbReference type="PROSITE" id="PS50507">
    <property type="entry name" value="RDRP_SSRNA_POS"/>
    <property type="match status" value="1"/>
</dbReference>
<dbReference type="PROSITE" id="PS51218">
    <property type="entry name" value="SF3_HELICASE_2"/>
    <property type="match status" value="1"/>
</dbReference>
<protein>
    <recommendedName>
        <fullName>Genome polyprotein</fullName>
    </recommendedName>
    <component>
        <recommendedName>
            <fullName>Leader protease</fullName>
            <shortName>Lpro</shortName>
            <ecNumber evidence="4">3.4.22.46</ecNumber>
        </recommendedName>
    </component>
    <component>
        <recommendedName>
            <fullName>Capsid protein VP0</fullName>
        </recommendedName>
        <alternativeName>
            <fullName>VP4-VP2</fullName>
        </alternativeName>
    </component>
    <component>
        <recommendedName>
            <fullName>Capsid protein VP4</fullName>
        </recommendedName>
        <alternativeName>
            <fullName>P1A</fullName>
        </alternativeName>
        <alternativeName>
            <fullName>Virion protein 4</fullName>
        </alternativeName>
    </component>
    <component>
        <recommendedName>
            <fullName>Capsid protein VP2</fullName>
        </recommendedName>
        <alternativeName>
            <fullName>P1B</fullName>
        </alternativeName>
        <alternativeName>
            <fullName>Virion protein 2</fullName>
        </alternativeName>
    </component>
    <component>
        <recommendedName>
            <fullName>Capsid protein VP3</fullName>
        </recommendedName>
        <alternativeName>
            <fullName>P1C</fullName>
        </alternativeName>
        <alternativeName>
            <fullName>Virion protein 3</fullName>
        </alternativeName>
    </component>
    <component>
        <recommendedName>
            <fullName>Capsid protein VP1</fullName>
        </recommendedName>
        <alternativeName>
            <fullName>P1D</fullName>
        </alternativeName>
        <alternativeName>
            <fullName>Virion protein 1</fullName>
        </alternativeName>
    </component>
    <component>
        <recommendedName>
            <fullName>Protein 2A</fullName>
            <shortName>P2A</shortName>
        </recommendedName>
        <alternativeName>
            <fullName>P52</fullName>
        </alternativeName>
    </component>
    <component>
        <recommendedName>
            <fullName>Protein 2B</fullName>
            <shortName>P2B</shortName>
        </recommendedName>
    </component>
    <component>
        <recommendedName>
            <fullName>Protein 2C</fullName>
            <shortName>P2C</shortName>
            <ecNumber evidence="4">3.6.1.15</ecNumber>
        </recommendedName>
    </component>
    <component>
        <recommendedName>
            <fullName>Protein 3A</fullName>
            <shortName>P3A</shortName>
        </recommendedName>
    </component>
    <component>
        <recommendedName>
            <fullName>Protein 3B-1</fullName>
            <shortName>P3B-1</shortName>
        </recommendedName>
        <alternativeName>
            <fullName>Genome-linked protein VPg1</fullName>
        </alternativeName>
    </component>
    <component>
        <recommendedName>
            <fullName>Protein 3B-2</fullName>
            <shortName>P3B-2</shortName>
        </recommendedName>
        <alternativeName>
            <fullName>Genome-linked protein VPg2</fullName>
        </alternativeName>
    </component>
    <component>
        <recommendedName>
            <fullName>Protein 3B-3</fullName>
            <shortName>P3B-3</shortName>
        </recommendedName>
        <alternativeName>
            <fullName>Genome-linked protein VPg3</fullName>
        </alternativeName>
    </component>
    <component>
        <recommendedName>
            <fullName>Protease 3C</fullName>
            <ecNumber>3.4.22.28</ecNumber>
        </recommendedName>
        <alternativeName>
            <fullName>Picornain 3C</fullName>
            <shortName>P3C</shortName>
        </alternativeName>
        <alternativeName>
            <fullName>Protease P20B</fullName>
        </alternativeName>
    </component>
    <component>
        <recommendedName>
            <fullName>RNA-directed RNA polymerase 3D-POL</fullName>
            <shortName>P3D-POL</shortName>
            <ecNumber evidence="4">2.7.7.48</ecNumber>
        </recommendedName>
        <alternativeName>
            <fullName>P56A</fullName>
        </alternativeName>
    </component>
</protein>
<organismHost>
    <name type="scientific">Bos taurus</name>
    <name type="common">Bovine</name>
    <dbReference type="NCBI Taxonomy" id="9913"/>
</organismHost>
<organismHost>
    <name type="scientific">Capra hircus</name>
    <name type="common">Goat</name>
    <dbReference type="NCBI Taxonomy" id="9925"/>
</organismHost>
<organismHost>
    <name type="scientific">Cervidae</name>
    <name type="common">Deer</name>
    <dbReference type="NCBI Taxonomy" id="9850"/>
</organismHost>
<organismHost>
    <name type="scientific">Erinaceidae</name>
    <name type="common">hedgehogs</name>
    <dbReference type="NCBI Taxonomy" id="9363"/>
</organismHost>
<organismHost>
    <name type="scientific">Loxodonta africana</name>
    <name type="common">African elephant</name>
    <dbReference type="NCBI Taxonomy" id="9785"/>
</organismHost>
<organismHost>
    <name type="scientific">Ovis aries</name>
    <name type="common">Sheep</name>
    <dbReference type="NCBI Taxonomy" id="9940"/>
</organismHost>
<organismHost>
    <name type="scientific">Rattus norvegicus</name>
    <name type="common">Rat</name>
    <dbReference type="NCBI Taxonomy" id="10116"/>
</organismHost>
<organismHost>
    <name type="scientific">Sus scrofa</name>
    <name type="common">Pig</name>
    <dbReference type="NCBI Taxonomy" id="9823"/>
</organismHost>
<sequence>MNTTDCFIALVHAIREIKTHFFSRYTGRMEFTLHNGEKKIFYSRPNNHDNCWLNTILQLFRYVDEPFFDWVYNSPENLTLSAIEQLEKLTGLELREGGPPALVIWNIKHLLHTGIGTASRPSEVCMVDGTDMCLADFHAGIFLKGQEHAVFACVTSDGWYAIDDEDFYPWTPDPSDVLVFVPYDQEPLNGGWKANVQRKLKGAGQSSPATGSQNQSGNTGSIINNYYMQQYQNSMDTQLGDNAISGGSNEGSTDTTSTHTTNTQNNDWFSKLASSAFSGLFGALLADKKTEETTLLEDRILTTRNGHTTSTTQSSVGVTYGYATTEDSTSGPNTSGLETRVHQAERFFKMTLFEWVPSQSFGHMHKVVLPSEPKGVYGGLVKSYAYMRNGWDVEVTAVGNQFNGGCLLVALVPEMGDISDREKYQLTLYPHQFINPRTNMTAHITVPYVGVNRYDQYNQHKPWTLVVMVVAPLTVNTSGAQQIKVYANIAPTNVHVAGELPSKEGIFPVACADGYGNMVTTDPKTADPAYGKVYNPPRTALPGRFTNYLDVAEACPTLLTFENVPYVSTRTDGQRLLAKFDVSLAAKHMSNTYLAGLAQYYTQYAGTINLHFMFTGPTDAKARYMVAYVPPGMEAPDNPEEAAHCIHAEWDTGLNSKFTFSIPYISAADYAYTASSEAETTSVQGWVCVYQITHGKADADALVVSASAGKDFELRLPVDARQQTTTTGESADPVTTTVENYGGETQTQRRHHTDVAFVLDRFVKVQVSGNQHTLDVMQVHKDSIVGALLRAATYYFSDLEIAVTHTGKLTWVPNGAPVSALDNTTNPTAYHKGPLTRLALPYTAPHRVLATAYTGTTAYTTGVRRGDLAHLAAAHARHLPTSFNFGAVKAETITELLVRMKRAELYCPRPVLPVQPAGDRHKQPLIAPAKQLLNFDLLKLAGDVESNPGPFFFSDVRSNFSKLVETINQMQEDMSTKHGPDFNRLVSAFEELATGVKAIRTGLDEAKPWYKLIKLLSRLSCMAAVAARSKDPVLVAIMLADTGLEILDSTFVVKKISDSLSSLFHVPAPVFSFGAPILLAGLVKVASSFFRSTPEDLERAEKQLKARDINDIFAILKNGEWLVKLILAIRDWIKAWIASEEKFVTMTDLVPGILEKQRDLNDPSKYKEAKEWLDNARQACLKNGNTHIANLCKVVAPAPSKSRPEPVVVCLRGKSGQGKSFLANVLAQAISTHFTGRTDSVWYCPPDPDHFDGYNQQTVVVMDDLGQNPDGKDFKYFAQMVSTTGFIPPMASLEDKGKPFNSKVIIATTNLYSGFTPRTMVCPDALNRRFHFDIDVSAKDGYKINNKLDIIKALEDTHTNPVAMFQYDCALLNGMAVEMKRMQQDMFKPQPPLQNVYQLVQEVIERVELHEKVSSHPIFKQISIPSQKSVLYFLIEKGQHEAAIEFFEGMVHDSIKEELRPLIQQTSFVKRAFKRLKENFEIVALCLTLLANIVIMIRETRKRQQMVDDAVNEYIEKANITTDDKTLDEAEKNPLETSGASTVGFRERTLPGHKARDDVNSEPAQPVEEQPQAEGPYAGPLERQKPLKVRAKLPQQEGPYAGPMERQKPLKVKAKAPVVKEGPYEGPVKKPVALKVKAKNLIVTESGAPPTDLQKMVMGNTKPVELILDGKTVAICCATGVFGTAYLVPRHLFAEKYDKIMLDGRAMTDSDYRVFEFEIKVKGQDMLSDAALMVLHRGNRVRDITKHFRDTARMKKGTPVVGVINNADVGRLIFSGEALTYKDIVVCMDGDTMPGLFAYRAATKAGYCGGAVLAKDGADTFIVGTHSAGGNGVGYCSCVSRSMLLKMKAHIDPEPHHEGLIVDTRDVEERVHVMRKTKLAPTVAHGVFNPDFGPAALSNRDPRLNEGVVLDEVIFSKHKGDTKMSEEDKALFRRCAADYASRLHSVLGTANAPLSIYEAIKGVDGLDAMEPDTAPGLPWALQGKRRGALIDFENGTVGPEVEAALKLMEKREYKFACQTFLKDEIRPMEKVRAGKTRIVDVLPVEHILYTRMMIGRFCAQMHSNNGPQIGSAVGCNPDVDWQRFGTHFAQYRNVWDVDYSAFDANHCSDAMNIMFEEVFRTEFGFHPNAEWILKTLVNTEHAYENKRITVEGGMPSGCSATSIINTILNNIYVLYALRRHYEGVELDTYTMISYGDDIVVASDYDLDFEALKPHFKSIGQTITPADKSDKGFVLGHSITDVTFLKRHFHMDYGTGFYKPVMASKTLEAILSFARRGTIQEKLISVAGLAVHSGPDEYRRLFEPFQGLFEIPSYRSLYLRWVNAVCGDA</sequence>
<keyword id="KW-0024">Alternative initiation</keyword>
<keyword id="KW-0067">ATP-binding</keyword>
<keyword id="KW-0167">Capsid protein</keyword>
<keyword id="KW-1167">Clathrin- and caveolin-independent endocytosis of virus by host</keyword>
<keyword id="KW-1165">Clathrin-mediated endocytosis of virus by host</keyword>
<keyword id="KW-0191">Covalent protein-RNA linkage</keyword>
<keyword id="KW-1015">Disulfide bond</keyword>
<keyword id="KW-0347">Helicase</keyword>
<keyword id="KW-1035">Host cytoplasm</keyword>
<keyword id="KW-1036">Host cytoplasmic vesicle</keyword>
<keyword id="KW-1038">Host endoplasmic reticulum</keyword>
<keyword id="KW-1043">Host membrane</keyword>
<keyword id="KW-1048">Host nucleus</keyword>
<keyword id="KW-0945">Host-virus interaction</keyword>
<keyword id="KW-0378">Hydrolase</keyword>
<keyword id="KW-0407">Ion channel</keyword>
<keyword id="KW-0406">Ion transport</keyword>
<keyword id="KW-0449">Lipoprotein</keyword>
<keyword id="KW-0472">Membrane</keyword>
<keyword id="KW-1122">Modulation of host chromatin by virus</keyword>
<keyword id="KW-0519">Myristate</keyword>
<keyword id="KW-0547">Nucleotide-binding</keyword>
<keyword id="KW-0548">Nucleotidyltransferase</keyword>
<keyword id="KW-0597">Phosphoprotein</keyword>
<keyword id="KW-0645">Protease</keyword>
<keyword id="KW-0694">RNA-binding</keyword>
<keyword id="KW-0696">RNA-directed RNA polymerase</keyword>
<keyword id="KW-1143">T=pseudo3 icosahedral capsid protein</keyword>
<keyword id="KW-0788">Thiol protease</keyword>
<keyword id="KW-0808">Transferase</keyword>
<keyword id="KW-0810">Translation regulation</keyword>
<keyword id="KW-0813">Transport</keyword>
<keyword id="KW-1161">Viral attachment to host cell</keyword>
<keyword id="KW-1182">Viral ion channel</keyword>
<keyword id="KW-1162">Viral penetration into host cytoplasm</keyword>
<keyword id="KW-0693">Viral RNA replication</keyword>
<keyword id="KW-0946">Virion</keyword>
<keyword id="KW-1164">Virus endocytosis by host</keyword>
<keyword id="KW-1160">Virus entry into host cell</keyword>
<feature type="chain" id="PRO_0000422504" description="Genome polyprotein" evidence="1">
    <location>
        <begin position="1"/>
        <end position="2328"/>
    </location>
</feature>
<feature type="chain" id="PRO_0000422505" description="Leader protease" evidence="1">
    <location>
        <begin position="1"/>
        <end position="201"/>
    </location>
</feature>
<feature type="chain" id="PRO_0000422506" description="Capsid protein VP0" evidence="9">
    <location>
        <begin position="202"/>
        <end position="504"/>
    </location>
</feature>
<feature type="chain" id="PRO_0000422507" description="Capsid protein VP4" evidence="9">
    <location>
        <begin position="202"/>
        <end position="286"/>
    </location>
</feature>
<feature type="chain" id="PRO_0000422508" description="Capsid protein VP2" evidence="9">
    <location>
        <begin position="287"/>
        <end position="504"/>
    </location>
</feature>
<feature type="chain" id="PRO_0000039869" description="Capsid protein VP3" evidence="9">
    <location>
        <begin position="505"/>
        <end position="723"/>
    </location>
</feature>
<feature type="chain" id="PRO_0000039870" description="Capsid protein VP1" evidence="1">
    <location>
        <begin position="724"/>
        <end position="931"/>
    </location>
</feature>
<feature type="chain" id="PRO_0000039871" description="Protein 2A" evidence="9">
    <location>
        <begin position="932"/>
        <end position="949"/>
    </location>
</feature>
<feature type="chain" id="PRO_0000422509" description="Protein 2B" evidence="9">
    <location>
        <begin position="950"/>
        <end position="1103"/>
    </location>
</feature>
<feature type="chain" id="PRO_0000422510" description="Protein 2C" evidence="9">
    <location>
        <begin position="1104"/>
        <end position="1421"/>
    </location>
</feature>
<feature type="chain" id="PRO_0000422511" description="Protein 3A" evidence="9">
    <location>
        <begin position="1422"/>
        <end position="1574"/>
    </location>
</feature>
<feature type="chain" id="PRO_0000422512" description="Protein 3B-1" evidence="9">
    <location>
        <begin position="1575"/>
        <end position="1597"/>
    </location>
</feature>
<feature type="chain" id="PRO_0000422513" description="Protein 3B-2" evidence="9">
    <location>
        <begin position="1598"/>
        <end position="1621"/>
    </location>
</feature>
<feature type="chain" id="PRO_0000422514" description="Protein 3B-3" evidence="9">
    <location>
        <begin position="1622"/>
        <end position="1645"/>
    </location>
</feature>
<feature type="chain" id="PRO_0000422515" description="Protease 3C" evidence="9">
    <location>
        <begin position="1646"/>
        <end position="1858"/>
    </location>
</feature>
<feature type="chain" id="PRO_0000422516" description="RNA-directed RNA polymerase 3D-POL" evidence="9">
    <location>
        <begin position="1859"/>
        <end position="2328"/>
    </location>
</feature>
<feature type="topological domain" description="Cytoplasmic" evidence="9">
    <location>
        <begin position="1"/>
        <end position="1476"/>
    </location>
</feature>
<feature type="intramembrane region" evidence="9">
    <location>
        <begin position="1477"/>
        <end position="1497"/>
    </location>
</feature>
<feature type="topological domain" description="Cytoplasmic" evidence="9">
    <location>
        <begin position="1498"/>
        <end position="2328"/>
    </location>
</feature>
<feature type="domain" description="Peptidase C28">
    <location>
        <begin position="1"/>
        <end position="201"/>
    </location>
</feature>
<feature type="domain" description="SF3 helicase" evidence="11">
    <location>
        <begin position="1185"/>
        <end position="1349"/>
    </location>
</feature>
<feature type="domain" description="Peptidase C3" evidence="12">
    <location>
        <begin position="1648"/>
        <end position="1844"/>
    </location>
</feature>
<feature type="domain" description="RdRp catalytic" evidence="10">
    <location>
        <begin position="2092"/>
        <end position="2210"/>
    </location>
</feature>
<feature type="region of interest" description="Disordered" evidence="13">
    <location>
        <begin position="199"/>
        <end position="218"/>
    </location>
</feature>
<feature type="region of interest" description="Disordered" evidence="13">
    <location>
        <begin position="238"/>
        <end position="265"/>
    </location>
</feature>
<feature type="region of interest" description="Antigenic epitope" evidence="2">
    <location>
        <begin position="787"/>
        <end position="795"/>
    </location>
</feature>
<feature type="region of interest" description="Disordered" evidence="13">
    <location>
        <begin position="1525"/>
        <end position="1580"/>
    </location>
</feature>
<feature type="short sequence motif" description="Cell attachment site" evidence="4">
    <location>
        <begin position="865"/>
        <end position="867"/>
    </location>
</feature>
<feature type="short sequence motif" description="Nuclear localization signal" evidence="7">
    <location>
        <begin position="1874"/>
        <end position="1882"/>
    </location>
</feature>
<feature type="compositionally biased region" description="Polar residues" evidence="13">
    <location>
        <begin position="204"/>
        <end position="218"/>
    </location>
</feature>
<feature type="compositionally biased region" description="Polar residues" evidence="13">
    <location>
        <begin position="238"/>
        <end position="251"/>
    </location>
</feature>
<feature type="compositionally biased region" description="Low complexity" evidence="13">
    <location>
        <begin position="252"/>
        <end position="265"/>
    </location>
</feature>
<feature type="compositionally biased region" description="Basic and acidic residues" evidence="13">
    <location>
        <begin position="1525"/>
        <end position="1534"/>
    </location>
</feature>
<feature type="compositionally biased region" description="Basic and acidic residues" evidence="13">
    <location>
        <begin position="1545"/>
        <end position="1559"/>
    </location>
</feature>
<feature type="active site" description="For leader protease activity" evidence="1">
    <location>
        <position position="51"/>
    </location>
</feature>
<feature type="active site" description="For leader protease activity" evidence="1">
    <location>
        <position position="148"/>
    </location>
</feature>
<feature type="active site" description="For leader protease activity" evidence="1">
    <location>
        <position position="163"/>
    </location>
</feature>
<feature type="active site" description="For protease 3C activity; Proton donor/acceptor" evidence="12">
    <location>
        <position position="1691"/>
    </location>
</feature>
<feature type="active site" description="For protease 3C activity" evidence="12">
    <location>
        <position position="1729"/>
    </location>
</feature>
<feature type="active site" description="For protease 3C activity" evidence="12">
    <location>
        <position position="1808"/>
    </location>
</feature>
<feature type="active site" description="For RdRp activity" evidence="8">
    <location>
        <position position="2196"/>
    </location>
</feature>
<feature type="binding site" evidence="11">
    <location>
        <begin position="1213"/>
        <end position="1220"/>
    </location>
    <ligand>
        <name>ATP</name>
        <dbReference type="ChEBI" id="CHEBI:30616"/>
    </ligand>
</feature>
<feature type="site" description="Cleavage; by leader protease" evidence="9">
    <location>
        <begin position="201"/>
        <end position="202"/>
    </location>
</feature>
<feature type="site" description="Cleavage" evidence="9">
    <location>
        <begin position="286"/>
        <end position="287"/>
    </location>
</feature>
<feature type="site" description="Cleavage; by picornain 3C" evidence="9">
    <location>
        <begin position="504"/>
        <end position="505"/>
    </location>
</feature>
<feature type="site" description="Cleavage; by picornain 3C" evidence="9">
    <location>
        <begin position="723"/>
        <end position="724"/>
    </location>
</feature>
<feature type="site" description="Cleavage; by picornain 3C" evidence="9">
    <location>
        <begin position="931"/>
        <end position="932"/>
    </location>
</feature>
<feature type="site" description="Cleavage; by ribosomal skip" evidence="9">
    <location>
        <begin position="949"/>
        <end position="950"/>
    </location>
</feature>
<feature type="site" description="Cleavage; by picornain 3C" evidence="9">
    <location>
        <begin position="1103"/>
        <end position="1104"/>
    </location>
</feature>
<feature type="site" description="Cleavage; by picornain 3C" evidence="9">
    <location>
        <begin position="1421"/>
        <end position="1422"/>
    </location>
</feature>
<feature type="site" description="Cleavage; by picornain 3C" evidence="9">
    <location>
        <begin position="1574"/>
        <end position="1575"/>
    </location>
</feature>
<feature type="site" description="Cleavage; by picornain 3C" evidence="9">
    <location>
        <begin position="1597"/>
        <end position="1598"/>
    </location>
</feature>
<feature type="site" description="Cleavage; by picornain 3C" evidence="9">
    <location>
        <begin position="1621"/>
        <end position="1622"/>
    </location>
</feature>
<feature type="site" description="Cleavage; by picornain 3C" evidence="9">
    <location>
        <begin position="1645"/>
        <end position="1646"/>
    </location>
</feature>
<feature type="site" description="Cleavage; by picornain 3C" evidence="9">
    <location>
        <begin position="1858"/>
        <end position="1859"/>
    </location>
</feature>
<feature type="modified residue" description="O-(5'-phospho-RNA)-tyrosine" evidence="4">
    <location>
        <position position="1577"/>
    </location>
</feature>
<feature type="modified residue" description="O-(5'-phospho-RNA)-tyrosine" evidence="4">
    <location>
        <position position="1600"/>
    </location>
</feature>
<feature type="modified residue" description="O-(5'-phospho-RNA)-tyrosine" evidence="4">
    <location>
        <position position="1624"/>
    </location>
</feature>
<feature type="lipid moiety-binding region" description="N-myristoyl glycine; by host" evidence="7">
    <location>
        <position position="202"/>
    </location>
</feature>
<feature type="disulfide bond" description="Interchain; in VP3 dimers" evidence="4">
    <location>
        <position position="511"/>
    </location>
</feature>
<feature type="splice variant" id="VSP_046531" description="In isoform Lb." evidence="14">
    <location>
        <begin position="1"/>
        <end position="28"/>
    </location>
</feature>
<feature type="sequence variant">
    <original>S</original>
    <variation>A</variation>
    <location>
        <position position="330"/>
    </location>
</feature>
<feature type="sequence variant">
    <original>V</original>
    <variation>A</variation>
    <location>
        <position position="376"/>
    </location>
</feature>
<feature type="sequence variant">
    <original>D</original>
    <variation>E</variation>
    <location>
        <position position="420"/>
    </location>
</feature>
<feature type="sequence variant">
    <original>N</original>
    <variation>K</variation>
    <location>
        <position position="458"/>
    </location>
</feature>
<feature type="sequence variant">
    <original>Y</original>
    <variation>F</variation>
    <location>
        <position position="515"/>
    </location>
</feature>
<feature type="sequence variant">
    <original>T</original>
    <variation>M</variation>
    <location>
        <position position="560"/>
    </location>
</feature>
<feature type="sequence variant">
    <original>N</original>
    <variation>S</variation>
    <location>
        <position position="638"/>
    </location>
</feature>
<feature type="sequence variant">
    <original>E</original>
    <variation>D</variation>
    <location>
        <position position="677"/>
    </location>
</feature>
<feature type="sequence variant">
    <original>Q</original>
    <variation>L</variation>
    <location>
        <position position="722"/>
    </location>
</feature>
<feature type="sequence variant">
    <original>T</original>
    <variation>I</variation>
    <location>
        <position position="747"/>
    </location>
</feature>
<feature type="sequence variant">
    <original>Q</original>
    <variation>H</variation>
    <location>
        <position position="766"/>
    </location>
</feature>
<feature type="sequence variant">
    <original>H</original>
    <variation>Q</variation>
    <location>
        <position position="805"/>
    </location>
</feature>
<feature type="sequence variant">
    <original>T</original>
    <variation>A</variation>
    <location>
        <position position="825"/>
    </location>
</feature>
<feature type="sequence variant">
    <original>A</original>
    <variation>T</variation>
    <location>
        <position position="852"/>
    </location>
</feature>
<feature type="sequence variant">
    <original>TGV</original>
    <variation>ASA</variation>
    <location>
        <begin position="861"/>
        <end position="863"/>
    </location>
</feature>
<feature type="sequence variant">
    <original>A</original>
    <variation>T</variation>
    <location>
        <position position="917"/>
    </location>
</feature>
<reference key="1">
    <citation type="journal article" date="2005" name="J. Virol.">
        <title>Comparative genomics of foot-and-mouth disease virus.</title>
        <authorList>
            <person name="Carrillo C."/>
            <person name="Tulman E.R."/>
            <person name="Delhon G."/>
            <person name="Lu Z."/>
            <person name="Carreno A."/>
            <person name="Vagnozzi A."/>
            <person name="Kutish G.F."/>
            <person name="Rock D.L."/>
        </authorList>
    </citation>
    <scope>NUCLEOTIDE SEQUENCE [GENOMIC RNA]</scope>
</reference>
<reference key="2">
    <citation type="journal article" date="1992" name="J. Virol.">
        <title>Evolution of the capsid protein genes of foot-and-mouth disease virus: antigenic variation without accumulation of amino acid substitutions over six decades.</title>
        <authorList>
            <person name="Martinez M.A."/>
            <person name="Dopazo J."/>
            <person name="Hernandez J."/>
            <person name="Mateu M.G."/>
            <person name="Sobrino F."/>
            <person name="Domingo E."/>
            <person name="Knowles N.J."/>
        </authorList>
    </citation>
    <scope>NUCLEOTIDE SEQUENCE [GENOMIC RNA] OF 202-933</scope>
</reference>
<reference key="3">
    <citation type="journal article" date="1982" name="Nucleic Acids Res.">
        <title>Comparison of the amino acid sequence of the major immunogen from three serotypes of foot and mouth disease virus.</title>
        <authorList>
            <person name="Makoff A.J."/>
            <person name="Paynter C.A."/>
            <person name="Rowlands D.J."/>
            <person name="Boothroyd J.C."/>
        </authorList>
    </citation>
    <scope>NUCLEOTIDE SEQUENCE [GENOMIC RNA] OF 714-947</scope>
</reference>
<name>POLG_FMDVI</name>
<organism>
    <name type="scientific">Foot-and-mouth disease virus (isolate -/Brazil/C3Indaial/1971 serotype C)</name>
    <name type="common">FMDV</name>
    <dbReference type="NCBI Taxonomy" id="12117"/>
    <lineage>
        <taxon>Viruses</taxon>
        <taxon>Riboviria</taxon>
        <taxon>Orthornavirae</taxon>
        <taxon>Pisuviricota</taxon>
        <taxon>Pisoniviricetes</taxon>
        <taxon>Picornavirales</taxon>
        <taxon>Picornaviridae</taxon>
        <taxon>Caphthovirinae</taxon>
        <taxon>Aphthovirus</taxon>
        <taxon>Foot-and-mouth disease virus</taxon>
    </lineage>
</organism>
<evidence type="ECO:0000250" key="1"/>
<evidence type="ECO:0000250" key="2">
    <source>
        <dbReference type="UniProtKB" id="A2I7M2"/>
    </source>
</evidence>
<evidence type="ECO:0000250" key="3">
    <source>
        <dbReference type="UniProtKB" id="P03300"/>
    </source>
</evidence>
<evidence type="ECO:0000250" key="4">
    <source>
        <dbReference type="UniProtKB" id="P03305"/>
    </source>
</evidence>
<evidence type="ECO:0000250" key="5">
    <source>
        <dbReference type="UniProtKB" id="P03306"/>
    </source>
</evidence>
<evidence type="ECO:0000250" key="6">
    <source>
        <dbReference type="UniProtKB" id="P03308"/>
    </source>
</evidence>
<evidence type="ECO:0000250" key="7">
    <source>
        <dbReference type="UniProtKB" id="P03311"/>
    </source>
</evidence>
<evidence type="ECO:0000250" key="8">
    <source>
        <dbReference type="UniProtKB" id="P12296"/>
    </source>
</evidence>
<evidence type="ECO:0000255" key="9"/>
<evidence type="ECO:0000255" key="10">
    <source>
        <dbReference type="PROSITE-ProRule" id="PRU00539"/>
    </source>
</evidence>
<evidence type="ECO:0000255" key="11">
    <source>
        <dbReference type="PROSITE-ProRule" id="PRU00551"/>
    </source>
</evidence>
<evidence type="ECO:0000255" key="12">
    <source>
        <dbReference type="PROSITE-ProRule" id="PRU01222"/>
    </source>
</evidence>
<evidence type="ECO:0000256" key="13">
    <source>
        <dbReference type="SAM" id="MobiDB-lite"/>
    </source>
</evidence>
<evidence type="ECO:0000305" key="14"/>
<accession>P03310</accession>
<accession>Q65066</accession>
<accession>Q6PMY0</accession>
<comment type="function">
    <molecule>Leader protease</molecule>
    <text evidence="4 6">Autocatalytically cleaves itself from the polyprotein at the L/VP0 junction. Also cleaves the host translation initiation factors EIF4G1 and EIF4G3, in order to shut off the capped cellular mRNA transcription. Plays a role in counteracting host innate antiviral response using diverse mechanisms. Possesses a deubiquitinase activity acting on both 'Lys-48' and 'Lys-63'-linked polyubiquitin chains. In turn, inhibits the ubiquitination and subsequent activation of key signaling molecules of type I IFN response such as host RIGI, TBK1, TRAF3 and TRAF6. Inhibits host NF-kappa-B activity by inducing a decrease in RELA mRNA levels. Cleaves a peptide bond in the C-terminus of host ISG15, resulting in the damaging of this modifier that can no longer be attached to target proteins. Also cleaves host G3BP1 and G3BP2 in order to inhibit cytoplasmic stress granules assembly.</text>
</comment>
<comment type="function">
    <molecule>Capsid protein VP4</molecule>
    <text evidence="3">Lies on the inner surface of the capsid shell. After binding to the host receptor, the capsid undergoes conformational changes. Capsid protein VP4 is released, capsid protein VP1 N-terminus is externalized, and together, they shape a pore in the host membrane through which the viral genome is translocated into the host cell cytoplasm. After genome has been released, the channel shrinks.</text>
</comment>
<comment type="function">
    <molecule>Capsid protein VP2</molecule>
    <text evidence="4 5">Forms an icosahedral capsid of pseudo T=3 symmetry with capsid proteins VP1 and VP3. The capsid is composed of 60 copies of each capsid protein organized in the form of twelve pentamers and encloses the viral positive strand RNA genome (By similarity). Upon acidifcation in the endosome, dissociates into pentamers (By similarity).</text>
</comment>
<comment type="function">
    <molecule>Capsid protein VP3</molecule>
    <text evidence="4 5">Forms an icosahedral capsid of pseudo T=3 symmetry with capsid proteins VP0 and VP3. The capsid is composed of 60 copies of each capsid protein organized in the form of twelve pentamers and encloses the viral positive strand RNA genome (By similarity). Upon acidifcation in the endosome, dissociates into pentamers (By similarity).</text>
</comment>
<comment type="function">
    <molecule>Capsid protein VP1</molecule>
    <text evidence="4 5">Forms an icosahedral capsid of pseudo T=3 symmetry with capsid proteins VP2 and VP3. The capsid is composed of 60 copies of each capsid protein organized in the form of twelve pentamers and encloses the viral positive strand RNA genome. Mediates cell entry by attachment to an integrin receptor, usually host ITGAV/ITGB6. In addition, targets host MAVS to suppress type I IFN pathway (By similarity). Upon acidifcation in the endosome, dissociates into pentamers (By similarity).</text>
</comment>
<comment type="function">
    <molecule>Protein 2A</molecule>
    <text evidence="4">Mediates self-processing of the polyprotein by a translational effect termed 'ribosome skipping'. Mechanistically, 2A-mediated cleavage occurs between the C-terminal glycine and the proline of the downstream protein 2B. In the case of foot-and-mouth disease virus, the 2A oligopeptide is post-translationally 'trimmed' from the C-terminus of the upstream protein 1D by 3C proteinase.</text>
</comment>
<comment type="function">
    <molecule>Protein 2B</molecule>
    <text evidence="4">Plays an essential role in the virus replication cycle by acting as a viroporin. Creates a pore in the host endoplasmic reticulum and as a consequence releases Ca2+ in the cytoplasm of infected cell. In turn, high levels of cytoplasmic calcium may trigger membrane trafficking and transport of viral ER-associated proteins to viroplasms, sites of viral genome replication.</text>
</comment>
<comment type="function">
    <molecule>Protein 2C</molecule>
    <text evidence="4">Associates with and induces structural rearrangements of intracellular membranes. Triggers host autophagy by interacting with host BECN1 and thereby promotes viral replication. Participates in viral replication and interacts with host DHX9. Displays RNA-binding, nucleotide binding and NTPase activities. May play a role in virion morphogenesis and viral RNA encapsidation by interacting with the capsid protein VP3.</text>
</comment>
<comment type="function">
    <molecule>Protein 3A</molecule>
    <text evidence="4">Plays important roles in virus replication, virulence and host range. Cooperates with host DDX56 to inhibit IRF3 nuclear translocation and subsequent type I interferon production.</text>
</comment>
<comment type="function">
    <molecule>Protein 3B-1</molecule>
    <text evidence="4">Covalently linked to the 5'-end of both the positive-strand and negative-strand genomic RNAs. Acts as a genome-linked replication primer.</text>
</comment>
<comment type="function">
    <molecule>Protein 3B-2</molecule>
    <text evidence="4">Covalently linked to the 5'-end of both the positive-strand and negative-strand genomic RNAs. Acts as a genome-linked replication primer.</text>
</comment>
<comment type="function">
    <molecule>Protein 3B-3</molecule>
    <text evidence="4">Covalently linked to the 5'-end of both the positive-strand and negative-strand genomic RNAs. Acts as a genome-linked replication primer.</text>
</comment>
<comment type="function">
    <molecule>Protease 3C</molecule>
    <text evidence="4">Cysteine protease that generates mature viral proteins from the precursor polyprotein. In addition to its proteolytic activity, binds to viral RNA and thus influences viral genome replication. RNA and substrate bind cooperatively to the protease.</text>
</comment>
<comment type="function">
    <text evidence="4">RNA-directed RNA polymerase 3D-POL replicates genomic and antigenomic RNA by recognizing replications specific signals. Covalently attaches UMP to a tyrosine of VPg, which is used to prime RNA synthesis. The positive stranded RNA genome is first replicated at virus induced membranous vesicles, creating a dsRNA genomic replication form. This dsRNA is then used as template to synthesize positive stranded RNA genomes. ss(+)RNA genomes are either translated, replicated or encapsidated.</text>
</comment>
<comment type="catalytic activity">
    <molecule>Leader protease</molecule>
    <reaction>
        <text>Autocatalytically cleaves itself from the polyprotein of the foot-and-mouth disease virus by hydrolysis of a Lys-|-Gly bond, but then cleaves host cell initiation factor eIF-4G at bonds -Gly-|-Arg- and -Lys-|-Arg-.</text>
        <dbReference type="EC" id="3.4.22.46"/>
    </reaction>
</comment>
<comment type="catalytic activity">
    <molecule>Protein 2C</molecule>
    <reaction evidence="4">
        <text>a ribonucleoside 5'-triphosphate + H2O = a ribonucleoside 5'-diphosphate + phosphate + H(+)</text>
        <dbReference type="Rhea" id="RHEA:23680"/>
        <dbReference type="ChEBI" id="CHEBI:15377"/>
        <dbReference type="ChEBI" id="CHEBI:15378"/>
        <dbReference type="ChEBI" id="CHEBI:43474"/>
        <dbReference type="ChEBI" id="CHEBI:57930"/>
        <dbReference type="ChEBI" id="CHEBI:61557"/>
        <dbReference type="EC" id="3.6.1.15"/>
    </reaction>
</comment>
<comment type="catalytic activity">
    <molecule>RNA-directed RNA polymerase 3D-POL</molecule>
    <reaction evidence="10">
        <text>RNA(n) + a ribonucleoside 5'-triphosphate = RNA(n+1) + diphosphate</text>
        <dbReference type="Rhea" id="RHEA:21248"/>
        <dbReference type="Rhea" id="RHEA-COMP:14527"/>
        <dbReference type="Rhea" id="RHEA-COMP:17342"/>
        <dbReference type="ChEBI" id="CHEBI:33019"/>
        <dbReference type="ChEBI" id="CHEBI:61557"/>
        <dbReference type="ChEBI" id="CHEBI:140395"/>
        <dbReference type="EC" id="2.7.7.48"/>
    </reaction>
</comment>
<comment type="catalytic activity">
    <molecule>Protease 3C</molecule>
    <reaction evidence="12">
        <text>Selective cleavage of Gln-|-Gly bond in the poliovirus polyprotein. In other picornavirus reactions Glu may be substituted for Gln, and Ser or Thr for Gly.</text>
        <dbReference type="EC" id="3.4.22.28"/>
    </reaction>
</comment>
<comment type="subunit">
    <molecule>Leader protease</molecule>
    <text evidence="4">Interacts with host ISG15.</text>
</comment>
<comment type="subunit">
    <molecule>Capsid protein VP1</molecule>
    <text evidence="4">Interacts (via R-G-D motif) with host ITGAV/ITGB6 (By similarity). Interacts with host MAVS; this interaction inhibits binding of host TRAF3 to MAVS, thereby suppressing interferon-mediated responses (By similarity).</text>
</comment>
<comment type="subunit">
    <molecule>Protein 2B</molecule>
    <text evidence="4">Forms homooligomers.</text>
</comment>
<comment type="subunit">
    <molecule>Protein 2C</molecule>
    <text evidence="4">Homohexamer. Interacts with host VIM. Interacts with host BECN1.</text>
</comment>
<comment type="subunit">
    <molecule>Protein 3A</molecule>
    <text evidence="4">Interacts with host DCTN3.</text>
</comment>
<comment type="subunit">
    <molecule>Protein 3B-1</molecule>
    <text evidence="7">Interacts with RNA-dependent RNA polymerase; this interaction allows 3B-1 to binds 2 polymerases and act as a primer. It also allows the recruitment of the RNA-dependent RNA polymerase to host membranes.</text>
</comment>
<comment type="subunit">
    <molecule>Protein 3B-2</molecule>
    <text evidence="7">Interacts with RNA-dependent RNA polymerase; this interaction allows 3B-2 to act as a primer.</text>
</comment>
<comment type="subunit">
    <molecule>Protein 3B-3</molecule>
    <text evidence="7">Interacts with RNA-dependent RNA polymerase; this interaction allows 3B-3 to act as a primer.</text>
</comment>
<comment type="subunit">
    <molecule>RNA-directed RNA polymerase 3D-POL</molecule>
    <text evidence="7">Interacts with 3B-1; this interaction allows 3B-1 to binds 2 polymerases and act as a primer. It also allows the recruitment of the RNA-dependent RNA polymerase to host membranes (By similarity). Interacts with 3B-2; this interaction allows 3B-2 to act as a primer (By similarity). Interacts with 3B-3; this interaction allows 3B-3 to act as a primer (By similarity).</text>
</comment>
<comment type="subcellular location">
    <molecule>Leader protease</molecule>
    <subcellularLocation>
        <location evidence="4">Host nucleus</location>
    </subcellularLocation>
    <subcellularLocation>
        <location evidence="4">Host cytoplasm</location>
    </subcellularLocation>
</comment>
<comment type="subcellular location">
    <molecule>Capsid protein VP3</molecule>
    <subcellularLocation>
        <location evidence="4">Virion</location>
    </subcellularLocation>
    <subcellularLocation>
        <location evidence="14">Host cytoplasm</location>
    </subcellularLocation>
</comment>
<comment type="subcellular location">
    <molecule>Capsid protein VP1</molecule>
    <subcellularLocation>
        <location evidence="4">Virion</location>
    </subcellularLocation>
    <subcellularLocation>
        <location evidence="14">Host cytoplasm</location>
    </subcellularLocation>
</comment>
<comment type="subcellular location">
    <molecule>Capsid protein VP2</molecule>
    <subcellularLocation>
        <location evidence="4">Virion</location>
    </subcellularLocation>
    <subcellularLocation>
        <location evidence="14">Host cytoplasm</location>
    </subcellularLocation>
</comment>
<comment type="subcellular location">
    <molecule>Protein 2B</molecule>
    <subcellularLocation>
        <location evidence="4">Host endoplasmic reticulum membrane</location>
    </subcellularLocation>
</comment>
<comment type="subcellular location">
    <molecule>Protein 2C</molecule>
    <subcellularLocation>
        <location evidence="14">Host cytoplasmic vesicle membrane</location>
        <topology evidence="14">Peripheral membrane protein</topology>
        <orientation evidence="14">Cytoplasmic side</orientation>
    </subcellularLocation>
    <text evidence="1">Probably localizes to the surface of intracellular membrane vesicles that are induced after virus infection as the site for viral RNA replication. These vesicles are derived from the endoplasmic reticulum (By similarity).</text>
</comment>
<comment type="subcellular location">
    <molecule>Protein 3A</molecule>
    <subcellularLocation>
        <location evidence="14">Host cytoplasmic vesicle membrane</location>
        <topology evidence="14">Peripheral membrane protein</topology>
        <orientation evidence="14">Cytoplasmic side</orientation>
    </subcellularLocation>
    <text evidence="1">Probably localizes to the surface of intracellular membrane vesicles that are induced after virus infection as the site for viral RNA replication. These vesicles are derived from the endoplasmic reticulum (By similarity).</text>
</comment>
<comment type="subcellular location">
    <molecule>Protein 3B-1</molecule>
    <subcellularLocation>
        <location evidence="14">Virion</location>
    </subcellularLocation>
</comment>
<comment type="subcellular location">
    <molecule>Protein 3B-2</molecule>
    <subcellularLocation>
        <location evidence="14">Virion</location>
    </subcellularLocation>
</comment>
<comment type="subcellular location">
    <molecule>Protein 3B-3</molecule>
    <subcellularLocation>
        <location evidence="14">Virion</location>
    </subcellularLocation>
</comment>
<comment type="subcellular location">
    <molecule>Protease 3C</molecule>
    <subcellularLocation>
        <location evidence="14">Host cytoplasm</location>
    </subcellularLocation>
</comment>
<comment type="subcellular location">
    <molecule>RNA-directed RNA polymerase 3D-POL</molecule>
    <subcellularLocation>
        <location evidence="14">Host cytoplasmic vesicle membrane</location>
        <topology evidence="14">Peripheral membrane protein</topology>
        <orientation evidence="14">Cytoplasmic side</orientation>
    </subcellularLocation>
    <text evidence="1">Probably localizes to the surface of intracellular membrane vesicles that are induced after virus infection as the site for viral RNA replication. These vesicles are derived from the endoplasmic reticulum (By similarity).</text>
</comment>
<comment type="alternative products">
    <event type="alternative initiation"/>
    <isoform>
        <id>P03310-1</id>
        <name>Lab</name>
        <sequence type="displayed"/>
    </isoform>
    <isoform>
        <id>P03310-2</id>
        <name>Lb</name>
        <sequence type="described" ref="VSP_046531"/>
    </isoform>
</comment>
<comment type="PTM">
    <molecule>Leader protease</molecule>
    <text evidence="4">Removes six residues from its own C-terminus, generating sLb(pro).</text>
</comment>
<comment type="PTM">
    <molecule>Genome polyprotein</molecule>
    <text evidence="4">Specific enzymatic cleavages in vivo by the viral proteases yield a variety of precursors and mature proteins. The polyprotein seems to be cotranslationally cleaved at the 2A/2B junction by a ribosomal skip from one codon to the next without formation of a peptide bond. This process would release the L-P1-2A peptide from the translational complex.</text>
</comment>
<comment type="PTM">
    <molecule>Capsid protein VP0</molecule>
    <text evidence="4">During virion maturation, immature virions are rendered infectious following cleavage of VP0 into VP4 and VP2. This maturation seems to be an autocatalytic event triggered by the presence of RNA in the capsid and is followed by a conformational change of the particle.</text>
</comment>
<comment type="PTM">
    <molecule>Capsid protein VP4</molecule>
    <text evidence="7">Myristoylation is required during RNA encapsidation and formation of the mature virus particle.</text>
</comment>
<comment type="PTM">
    <molecule>Protein 3B-1</molecule>
    <text evidence="4">Uridylylated by the polymerase and covalently linked to the 5'-end of genomic RNA. These uridylylated forms act as a nucleotide-peptide primer for the polymerase.</text>
</comment>
<comment type="PTM">
    <molecule>Protein 3B-2</molecule>
    <text evidence="4">Uridylylated by the polymerase and covalently linked to the 5'-end of genomic RNA. These uridylylated forms act as a nucleotide-peptide primer for the polymerase.</text>
</comment>
<comment type="PTM">
    <molecule>Protein 3B-3</molecule>
    <text evidence="4">Uridylylated by the polymerase and covalently linked to the 5'-end of genomic RNA. These uridylylated forms act as a nucleotide-peptide primer for the polymerase.</text>
</comment>
<comment type="miscellaneous">
    <molecule>Capsid protein VP1</molecule>
    <text evidence="14">Contains the main antigenic determinants of the virion; therefore, changes in its sequence must be responsible for the high antigenic variability of the virus.</text>
</comment>
<comment type="miscellaneous">
    <text evidence="1">The capsid protein VP1 contains the main antigenic determinants of the virion; therefore, changes in its sequence must be responsible for the high antigenic variability of the virus.</text>
</comment>
<comment type="similarity">
    <text evidence="14">Belongs to the picornaviruses polyprotein family.</text>
</comment>
<proteinExistence type="inferred from homology"/>